<protein>
    <recommendedName>
        <fullName>F-box only protein 34</fullName>
    </recommendedName>
</protein>
<dbReference type="EMBL" id="BX248268">
    <property type="protein sequence ID" value="CAD62596.1"/>
    <property type="status" value="ALT_INIT"/>
    <property type="molecule type" value="mRNA"/>
</dbReference>
<dbReference type="EMBL" id="BC095482">
    <property type="protein sequence ID" value="AAH95482.2"/>
    <property type="molecule type" value="mRNA"/>
</dbReference>
<dbReference type="EMBL" id="BC109120">
    <property type="protein sequence ID" value="AAI09121.1"/>
    <property type="molecule type" value="mRNA"/>
</dbReference>
<dbReference type="EMBL" id="BC109121">
    <property type="protein sequence ID" value="AAI09122.1"/>
    <property type="molecule type" value="mRNA"/>
</dbReference>
<dbReference type="EMBL" id="AK000732">
    <property type="protein sequence ID" value="BAA91346.1"/>
    <property type="status" value="ALT_INIT"/>
    <property type="molecule type" value="mRNA"/>
</dbReference>
<dbReference type="EMBL" id="CR457249">
    <property type="protein sequence ID" value="CAG33530.1"/>
    <property type="molecule type" value="mRNA"/>
</dbReference>
<dbReference type="CCDS" id="CCDS32086.1"/>
<dbReference type="RefSeq" id="NP_060413.2">
    <property type="nucleotide sequence ID" value="NM_017943.3"/>
</dbReference>
<dbReference type="RefSeq" id="NP_689417.1">
    <property type="nucleotide sequence ID" value="NM_152231.2"/>
</dbReference>
<dbReference type="RefSeq" id="XP_005267848.1">
    <property type="nucleotide sequence ID" value="XM_005267791.4"/>
</dbReference>
<dbReference type="RefSeq" id="XP_006720248.1">
    <property type="nucleotide sequence ID" value="XM_006720185.4"/>
</dbReference>
<dbReference type="RefSeq" id="XP_016876881.1">
    <property type="nucleotide sequence ID" value="XM_017021392.1"/>
</dbReference>
<dbReference type="RefSeq" id="XP_016876882.1">
    <property type="nucleotide sequence ID" value="XM_017021393.3"/>
</dbReference>
<dbReference type="RefSeq" id="XP_054232257.1">
    <property type="nucleotide sequence ID" value="XM_054376282.1"/>
</dbReference>
<dbReference type="RefSeq" id="XP_054232258.1">
    <property type="nucleotide sequence ID" value="XM_054376283.1"/>
</dbReference>
<dbReference type="BioGRID" id="120359">
    <property type="interactions" value="58"/>
</dbReference>
<dbReference type="ComplexPortal" id="CPX-7975">
    <property type="entry name" value="SCF E3 ubiquitin ligase complex, FBXO34 variant"/>
</dbReference>
<dbReference type="FunCoup" id="Q9NWN3">
    <property type="interactions" value="634"/>
</dbReference>
<dbReference type="IntAct" id="Q9NWN3">
    <property type="interactions" value="35"/>
</dbReference>
<dbReference type="STRING" id="9606.ENSP00000313159"/>
<dbReference type="iPTMnet" id="Q9NWN3"/>
<dbReference type="PhosphoSitePlus" id="Q9NWN3"/>
<dbReference type="BioMuta" id="FBXO34"/>
<dbReference type="DMDM" id="61252689"/>
<dbReference type="MassIVE" id="Q9NWN3"/>
<dbReference type="PaxDb" id="9606-ENSP00000313159"/>
<dbReference type="PeptideAtlas" id="Q9NWN3"/>
<dbReference type="ProteomicsDB" id="82956"/>
<dbReference type="Antibodypedia" id="24028">
    <property type="antibodies" value="99 antibodies from 17 providers"/>
</dbReference>
<dbReference type="DNASU" id="55030"/>
<dbReference type="Ensembl" id="ENST00000313833.5">
    <property type="protein sequence ID" value="ENSP00000313159.4"/>
    <property type="gene ID" value="ENSG00000178974.11"/>
</dbReference>
<dbReference type="Ensembl" id="ENST00000440021.1">
    <property type="protein sequence ID" value="ENSP00000394117.1"/>
    <property type="gene ID" value="ENSG00000178974.11"/>
</dbReference>
<dbReference type="Ensembl" id="ENST00000679934.1">
    <property type="protein sequence ID" value="ENSP00000505918.1"/>
    <property type="gene ID" value="ENSG00000178974.11"/>
</dbReference>
<dbReference type="Ensembl" id="ENST00000680658.1">
    <property type="protein sequence ID" value="ENSP00000506499.1"/>
    <property type="gene ID" value="ENSG00000178974.11"/>
</dbReference>
<dbReference type="Ensembl" id="ENST00000680682.1">
    <property type="protein sequence ID" value="ENSP00000504946.1"/>
    <property type="gene ID" value="ENSG00000178974.11"/>
</dbReference>
<dbReference type="Ensembl" id="ENST00000681074.1">
    <property type="protein sequence ID" value="ENSP00000506304.1"/>
    <property type="gene ID" value="ENSG00000178974.11"/>
</dbReference>
<dbReference type="Ensembl" id="ENST00000681400.1">
    <property type="protein sequence ID" value="ENSP00000506349.1"/>
    <property type="gene ID" value="ENSG00000178974.11"/>
</dbReference>
<dbReference type="Ensembl" id="ENST00000681904.1">
    <property type="protein sequence ID" value="ENSP00000505815.1"/>
    <property type="gene ID" value="ENSG00000178974.11"/>
</dbReference>
<dbReference type="GeneID" id="55030"/>
<dbReference type="KEGG" id="hsa:55030"/>
<dbReference type="MANE-Select" id="ENST00000313833.5">
    <property type="protein sequence ID" value="ENSP00000313159.4"/>
    <property type="RefSeq nucleotide sequence ID" value="NM_017943.4"/>
    <property type="RefSeq protein sequence ID" value="NP_060413.2"/>
</dbReference>
<dbReference type="UCSC" id="uc001xbu.4">
    <property type="organism name" value="human"/>
</dbReference>
<dbReference type="AGR" id="HGNC:20201"/>
<dbReference type="CTD" id="55030"/>
<dbReference type="DisGeNET" id="55030"/>
<dbReference type="GeneCards" id="FBXO34"/>
<dbReference type="HGNC" id="HGNC:20201">
    <property type="gene designation" value="FBXO34"/>
</dbReference>
<dbReference type="HPA" id="ENSG00000178974">
    <property type="expression patterns" value="Low tissue specificity"/>
</dbReference>
<dbReference type="MIM" id="609104">
    <property type="type" value="gene"/>
</dbReference>
<dbReference type="neXtProt" id="NX_Q9NWN3"/>
<dbReference type="OpenTargets" id="ENSG00000178974"/>
<dbReference type="PharmGKB" id="PA134910884"/>
<dbReference type="VEuPathDB" id="HostDB:ENSG00000178974"/>
<dbReference type="eggNOG" id="ENOG502QRQQ">
    <property type="taxonomic scope" value="Eukaryota"/>
</dbReference>
<dbReference type="GeneTree" id="ENSGT00530000064222"/>
<dbReference type="InParanoid" id="Q9NWN3"/>
<dbReference type="OMA" id="MKNSNRY"/>
<dbReference type="OrthoDB" id="10052741at2759"/>
<dbReference type="PAN-GO" id="Q9NWN3">
    <property type="GO annotations" value="0 GO annotations based on evolutionary models"/>
</dbReference>
<dbReference type="PhylomeDB" id="Q9NWN3"/>
<dbReference type="TreeFam" id="TF331673"/>
<dbReference type="PathwayCommons" id="Q9NWN3"/>
<dbReference type="SignaLink" id="Q9NWN3"/>
<dbReference type="BioGRID-ORCS" id="55030">
    <property type="hits" value="10 hits in 1198 CRISPR screens"/>
</dbReference>
<dbReference type="ChiTaRS" id="FBXO34">
    <property type="organism name" value="human"/>
</dbReference>
<dbReference type="GenomeRNAi" id="55030"/>
<dbReference type="Pharos" id="Q9NWN3">
    <property type="development level" value="Tdark"/>
</dbReference>
<dbReference type="PRO" id="PR:Q9NWN3"/>
<dbReference type="Proteomes" id="UP000005640">
    <property type="component" value="Chromosome 14"/>
</dbReference>
<dbReference type="RNAct" id="Q9NWN3">
    <property type="molecule type" value="protein"/>
</dbReference>
<dbReference type="Bgee" id="ENSG00000178974">
    <property type="expression patterns" value="Expressed in secondary oocyte and 212 other cell types or tissues"/>
</dbReference>
<dbReference type="ExpressionAtlas" id="Q9NWN3">
    <property type="expression patterns" value="baseline and differential"/>
</dbReference>
<dbReference type="CDD" id="cd22176">
    <property type="entry name" value="F-box_FBXO34"/>
    <property type="match status" value="1"/>
</dbReference>
<dbReference type="InterPro" id="IPR036047">
    <property type="entry name" value="F-box-like_dom_sf"/>
</dbReference>
<dbReference type="InterPro" id="IPR001810">
    <property type="entry name" value="F-box_dom"/>
</dbReference>
<dbReference type="InterPro" id="IPR039594">
    <property type="entry name" value="FBXO34/46"/>
</dbReference>
<dbReference type="PANTHER" id="PTHR16271:SF11">
    <property type="entry name" value="F-BOX ONLY PROTEIN 34"/>
    <property type="match status" value="1"/>
</dbReference>
<dbReference type="PANTHER" id="PTHR16271">
    <property type="entry name" value="F-BOX ONLY PROTEIN 34/46 FAMILY MEMBER"/>
    <property type="match status" value="1"/>
</dbReference>
<dbReference type="Pfam" id="PF12937">
    <property type="entry name" value="F-box-like"/>
    <property type="match status" value="1"/>
</dbReference>
<dbReference type="SUPFAM" id="SSF81383">
    <property type="entry name" value="F-box domain"/>
    <property type="match status" value="1"/>
</dbReference>
<dbReference type="PROSITE" id="PS50181">
    <property type="entry name" value="FBOX"/>
    <property type="match status" value="1"/>
</dbReference>
<comment type="function">
    <text evidence="1">Substrate-recognition component of the SCF (SKP1-CUL1-F-box protein)-type E3 ubiquitin ligase complex.</text>
</comment>
<comment type="subunit">
    <text evidence="1">Directly interacts with SKP1 and CUL1.</text>
</comment>
<comment type="interaction">
    <interactant intactId="EBI-719816">
        <id>Q9NWN3</id>
    </interactant>
    <interactant intactId="EBI-1211484">
        <id>P05187</id>
        <label>ALPP</label>
    </interactant>
    <organismsDiffer>false</organismsDiffer>
    <experiments>3</experiments>
</comment>
<comment type="interaction">
    <interactant intactId="EBI-719816">
        <id>Q9NWN3</id>
    </interactant>
    <interactant intactId="EBI-747133">
        <id>P27658</id>
        <label>COL8A1</label>
    </interactant>
    <organismsDiffer>false</organismsDiffer>
    <experiments>3</experiments>
</comment>
<comment type="interaction">
    <interactant intactId="EBI-719816">
        <id>Q9NWN3</id>
    </interactant>
    <interactant intactId="EBI-11988027">
        <id>Q9NRI5-2</id>
        <label>DISC1</label>
    </interactant>
    <organismsDiffer>false</organismsDiffer>
    <experiments>3</experiments>
</comment>
<comment type="interaction">
    <interactant intactId="EBI-719816">
        <id>Q9NWN3</id>
    </interactant>
    <interactant intactId="EBI-12836320">
        <id>Q92915-2</id>
        <label>FGF14</label>
    </interactant>
    <organismsDiffer>false</organismsDiffer>
    <experiments>3</experiments>
</comment>
<comment type="interaction">
    <interactant intactId="EBI-719816">
        <id>Q9NWN3</id>
    </interactant>
    <interactant intactId="EBI-10171697">
        <id>Q6A162</id>
        <label>KRT40</label>
    </interactant>
    <organismsDiffer>false</organismsDiffer>
    <experiments>3</experiments>
</comment>
<comment type="interaction">
    <interactant intactId="EBI-719816">
        <id>Q9NWN3</id>
    </interactant>
    <interactant intactId="EBI-10217483">
        <id>P60412</id>
        <label>KRTAP10-11</label>
    </interactant>
    <organismsDiffer>false</organismsDiffer>
    <experiments>3</experiments>
</comment>
<comment type="interaction">
    <interactant intactId="EBI-719816">
        <id>Q9NWN3</id>
    </interactant>
    <interactant intactId="EBI-10172150">
        <id>P60370</id>
        <label>KRTAP10-5</label>
    </interactant>
    <organismsDiffer>false</organismsDiffer>
    <experiments>3</experiments>
</comment>
<comment type="interaction">
    <interactant intactId="EBI-719816">
        <id>Q9NWN3</id>
    </interactant>
    <interactant intactId="EBI-10171774">
        <id>P60410</id>
        <label>KRTAP10-8</label>
    </interactant>
    <organismsDiffer>false</organismsDiffer>
    <experiments>3</experiments>
</comment>
<comment type="interaction">
    <interactant intactId="EBI-719816">
        <id>Q9NWN3</id>
    </interactant>
    <interactant intactId="EBI-10176396">
        <id>P60329</id>
        <label>KRTAP12-4</label>
    </interactant>
    <organismsDiffer>false</organismsDiffer>
    <experiments>4</experiments>
</comment>
<comment type="interaction">
    <interactant intactId="EBI-719816">
        <id>Q9NWN3</id>
    </interactant>
    <interactant intactId="EBI-10302392">
        <id>Q9BYQ6</id>
        <label>KRTAP4-11</label>
    </interactant>
    <organismsDiffer>false</organismsDiffer>
    <experiments>3</experiments>
</comment>
<comment type="interaction">
    <interactant intactId="EBI-719816">
        <id>Q9NWN3</id>
    </interactant>
    <interactant intactId="EBI-739863">
        <id>Q9BQ66</id>
        <label>KRTAP4-12</label>
    </interactant>
    <organismsDiffer>false</organismsDiffer>
    <experiments>3</experiments>
</comment>
<comment type="interaction">
    <interactant intactId="EBI-719816">
        <id>Q9NWN3</id>
    </interactant>
    <interactant intactId="EBI-11993254">
        <id>Q9BYR2</id>
        <label>KRTAP4-5</label>
    </interactant>
    <organismsDiffer>false</organismsDiffer>
    <experiments>5</experiments>
</comment>
<comment type="interaction">
    <interactant intactId="EBI-719816">
        <id>Q9NWN3</id>
    </interactant>
    <interactant intactId="EBI-11974251">
        <id>Q6L8H2</id>
        <label>KRTAP5-3</label>
    </interactant>
    <organismsDiffer>false</organismsDiffer>
    <experiments>3</experiments>
</comment>
<comment type="interaction">
    <interactant intactId="EBI-719816">
        <id>Q9NWN3</id>
    </interactant>
    <interactant intactId="EBI-1044640">
        <id>Q9BYQ4</id>
        <label>KRTAP9-2</label>
    </interactant>
    <organismsDiffer>false</organismsDiffer>
    <experiments>3</experiments>
</comment>
<comment type="interaction">
    <interactant intactId="EBI-719816">
        <id>Q9NWN3</id>
    </interactant>
    <interactant intactId="EBI-1043191">
        <id>Q9BYQ3</id>
        <label>KRTAP9-3</label>
    </interactant>
    <organismsDiffer>false</organismsDiffer>
    <experiments>3</experiments>
</comment>
<comment type="interaction">
    <interactant intactId="EBI-719816">
        <id>Q9NWN3</id>
    </interactant>
    <interactant intactId="EBI-11958364">
        <id>Q9BYQ0</id>
        <label>KRTAP9-8</label>
    </interactant>
    <organismsDiffer>false</organismsDiffer>
    <experiments>3</experiments>
</comment>
<comment type="interaction">
    <interactant intactId="EBI-719816">
        <id>Q9NWN3</id>
    </interactant>
    <interactant intactId="EBI-724076">
        <id>Q99750</id>
        <label>MDFI</label>
    </interactant>
    <organismsDiffer>false</organismsDiffer>
    <experiments>3</experiments>
</comment>
<comment type="interaction">
    <interactant intactId="EBI-719816">
        <id>Q9NWN3</id>
    </interactant>
    <interactant intactId="EBI-742948">
        <id>Q5JR59</id>
        <label>MTUS2</label>
    </interactant>
    <organismsDiffer>false</organismsDiffer>
    <experiments>3</experiments>
</comment>
<comment type="interaction">
    <interactant intactId="EBI-719816">
        <id>Q9NWN3</id>
    </interactant>
    <interactant intactId="EBI-11522433">
        <id>Q5JR59-3</id>
        <label>MTUS2</label>
    </interactant>
    <organismsDiffer>false</organismsDiffer>
    <experiments>4</experiments>
</comment>
<comment type="interaction">
    <interactant intactId="EBI-719816">
        <id>Q9NWN3</id>
    </interactant>
    <interactant intactId="EBI-10277776">
        <id>Q8WWZ8</id>
        <label>OIT3</label>
    </interactant>
    <organismsDiffer>false</organismsDiffer>
    <experiments>3</experiments>
</comment>
<comment type="interaction">
    <interactant intactId="EBI-719816">
        <id>Q9NWN3</id>
    </interactant>
    <interactant intactId="EBI-11747707">
        <id>B2RUY7</id>
        <label>VWC2L</label>
    </interactant>
    <organismsDiffer>false</organismsDiffer>
    <experiments>3</experiments>
</comment>
<comment type="sequence caution" evidence="7">
    <conflict type="erroneous initiation">
        <sequence resource="EMBL-CDS" id="BAA91346"/>
    </conflict>
</comment>
<comment type="sequence caution" evidence="7">
    <conflict type="erroneous initiation">
        <sequence resource="EMBL-CDS" id="CAD62596"/>
    </conflict>
</comment>
<gene>
    <name type="primary">FBXO34</name>
    <name type="synonym">FBX34</name>
</gene>
<reference key="1">
    <citation type="submission" date="2003-02" db="EMBL/GenBank/DDBJ databases">
        <title>Full-length cDNA libraries and normalization.</title>
        <authorList>
            <person name="Li W.B."/>
            <person name="Gruber C."/>
            <person name="Jessee J."/>
            <person name="Polayes D."/>
        </authorList>
    </citation>
    <scope>NUCLEOTIDE SEQUENCE [LARGE SCALE MRNA]</scope>
    <source>
        <tissue>Neuroblastoma</tissue>
    </source>
</reference>
<reference key="2">
    <citation type="journal article" date="2004" name="Genome Res.">
        <title>The status, quality, and expansion of the NIH full-length cDNA project: the Mammalian Gene Collection (MGC).</title>
        <authorList>
            <consortium name="The MGC Project Team"/>
        </authorList>
    </citation>
    <scope>NUCLEOTIDE SEQUENCE [LARGE SCALE MRNA]</scope>
    <scope>VARIANTS ASN-470 AND PRO-533</scope>
    <source>
        <tissue>Placenta</tissue>
    </source>
</reference>
<reference key="3">
    <citation type="journal article" date="2004" name="Nat. Genet.">
        <title>Complete sequencing and characterization of 21,243 full-length human cDNAs.</title>
        <authorList>
            <person name="Ota T."/>
            <person name="Suzuki Y."/>
            <person name="Nishikawa T."/>
            <person name="Otsuki T."/>
            <person name="Sugiyama T."/>
            <person name="Irie R."/>
            <person name="Wakamatsu A."/>
            <person name="Hayashi K."/>
            <person name="Sato H."/>
            <person name="Nagai K."/>
            <person name="Kimura K."/>
            <person name="Makita H."/>
            <person name="Sekine M."/>
            <person name="Obayashi M."/>
            <person name="Nishi T."/>
            <person name="Shibahara T."/>
            <person name="Tanaka T."/>
            <person name="Ishii S."/>
            <person name="Yamamoto J."/>
            <person name="Saito K."/>
            <person name="Kawai Y."/>
            <person name="Isono Y."/>
            <person name="Nakamura Y."/>
            <person name="Nagahari K."/>
            <person name="Murakami K."/>
            <person name="Yasuda T."/>
            <person name="Iwayanagi T."/>
            <person name="Wagatsuma M."/>
            <person name="Shiratori A."/>
            <person name="Sudo H."/>
            <person name="Hosoiri T."/>
            <person name="Kaku Y."/>
            <person name="Kodaira H."/>
            <person name="Kondo H."/>
            <person name="Sugawara M."/>
            <person name="Takahashi M."/>
            <person name="Kanda K."/>
            <person name="Yokoi T."/>
            <person name="Furuya T."/>
            <person name="Kikkawa E."/>
            <person name="Omura Y."/>
            <person name="Abe K."/>
            <person name="Kamihara K."/>
            <person name="Katsuta N."/>
            <person name="Sato K."/>
            <person name="Tanikawa M."/>
            <person name="Yamazaki M."/>
            <person name="Ninomiya K."/>
            <person name="Ishibashi T."/>
            <person name="Yamashita H."/>
            <person name="Murakawa K."/>
            <person name="Fujimori K."/>
            <person name="Tanai H."/>
            <person name="Kimata M."/>
            <person name="Watanabe M."/>
            <person name="Hiraoka S."/>
            <person name="Chiba Y."/>
            <person name="Ishida S."/>
            <person name="Ono Y."/>
            <person name="Takiguchi S."/>
            <person name="Watanabe S."/>
            <person name="Yosida M."/>
            <person name="Hotuta T."/>
            <person name="Kusano J."/>
            <person name="Kanehori K."/>
            <person name="Takahashi-Fujii A."/>
            <person name="Hara H."/>
            <person name="Tanase T.-O."/>
            <person name="Nomura Y."/>
            <person name="Togiya S."/>
            <person name="Komai F."/>
            <person name="Hara R."/>
            <person name="Takeuchi K."/>
            <person name="Arita M."/>
            <person name="Imose N."/>
            <person name="Musashino K."/>
            <person name="Yuuki H."/>
            <person name="Oshima A."/>
            <person name="Sasaki N."/>
            <person name="Aotsuka S."/>
            <person name="Yoshikawa Y."/>
            <person name="Matsunawa H."/>
            <person name="Ichihara T."/>
            <person name="Shiohata N."/>
            <person name="Sano S."/>
            <person name="Moriya S."/>
            <person name="Momiyama H."/>
            <person name="Satoh N."/>
            <person name="Takami S."/>
            <person name="Terashima Y."/>
            <person name="Suzuki O."/>
            <person name="Nakagawa S."/>
            <person name="Senoh A."/>
            <person name="Mizoguchi H."/>
            <person name="Goto Y."/>
            <person name="Shimizu F."/>
            <person name="Wakebe H."/>
            <person name="Hishigaki H."/>
            <person name="Watanabe T."/>
            <person name="Sugiyama A."/>
            <person name="Takemoto M."/>
            <person name="Kawakami B."/>
            <person name="Yamazaki M."/>
            <person name="Watanabe K."/>
            <person name="Kumagai A."/>
            <person name="Itakura S."/>
            <person name="Fukuzumi Y."/>
            <person name="Fujimori Y."/>
            <person name="Komiyama M."/>
            <person name="Tashiro H."/>
            <person name="Tanigami A."/>
            <person name="Fujiwara T."/>
            <person name="Ono T."/>
            <person name="Yamada K."/>
            <person name="Fujii Y."/>
            <person name="Ozaki K."/>
            <person name="Hirao M."/>
            <person name="Ohmori Y."/>
            <person name="Kawabata A."/>
            <person name="Hikiji T."/>
            <person name="Kobatake N."/>
            <person name="Inagaki H."/>
            <person name="Ikema Y."/>
            <person name="Okamoto S."/>
            <person name="Okitani R."/>
            <person name="Kawakami T."/>
            <person name="Noguchi S."/>
            <person name="Itoh T."/>
            <person name="Shigeta K."/>
            <person name="Senba T."/>
            <person name="Matsumura K."/>
            <person name="Nakajima Y."/>
            <person name="Mizuno T."/>
            <person name="Morinaga M."/>
            <person name="Sasaki M."/>
            <person name="Togashi T."/>
            <person name="Oyama M."/>
            <person name="Hata H."/>
            <person name="Watanabe M."/>
            <person name="Komatsu T."/>
            <person name="Mizushima-Sugano J."/>
            <person name="Satoh T."/>
            <person name="Shirai Y."/>
            <person name="Takahashi Y."/>
            <person name="Nakagawa K."/>
            <person name="Okumura K."/>
            <person name="Nagase T."/>
            <person name="Nomura N."/>
            <person name="Kikuchi H."/>
            <person name="Masuho Y."/>
            <person name="Yamashita R."/>
            <person name="Nakai K."/>
            <person name="Yada T."/>
            <person name="Nakamura Y."/>
            <person name="Ohara O."/>
            <person name="Isogai T."/>
            <person name="Sugano S."/>
        </authorList>
    </citation>
    <scope>NUCLEOTIDE SEQUENCE [LARGE SCALE MRNA] OF 405-711</scope>
    <scope>VARIANTS ASN-470 AND PRO-533</scope>
</reference>
<reference key="4">
    <citation type="submission" date="2004-06" db="EMBL/GenBank/DDBJ databases">
        <title>Cloning of human full open reading frames in Gateway(TM) system entry vector (pDONR201).</title>
        <authorList>
            <person name="Ebert L."/>
            <person name="Schick M."/>
            <person name="Neubert P."/>
            <person name="Schatten R."/>
            <person name="Henze S."/>
            <person name="Korn B."/>
        </authorList>
    </citation>
    <scope>NUCLEOTIDE SEQUENCE [LARGE SCALE MRNA] OF 407-711</scope>
    <scope>VARIANTS ASN-470 AND PRO-533</scope>
</reference>
<organism>
    <name type="scientific">Homo sapiens</name>
    <name type="common">Human</name>
    <dbReference type="NCBI Taxonomy" id="9606"/>
    <lineage>
        <taxon>Eukaryota</taxon>
        <taxon>Metazoa</taxon>
        <taxon>Chordata</taxon>
        <taxon>Craniata</taxon>
        <taxon>Vertebrata</taxon>
        <taxon>Euteleostomi</taxon>
        <taxon>Mammalia</taxon>
        <taxon>Eutheria</taxon>
        <taxon>Euarchontoglires</taxon>
        <taxon>Primates</taxon>
        <taxon>Haplorrhini</taxon>
        <taxon>Catarrhini</taxon>
        <taxon>Hominidae</taxon>
        <taxon>Homo</taxon>
    </lineage>
</organism>
<accession>Q9NWN3</accession>
<accession>Q2VPB5</accession>
<accession>Q4VBP5</accession>
<accession>Q86TY4</accession>
<sequence>MHLKPYWKLQKKEHPPEVSRETQRTPMNHQKAVNDETCKASHITSSVFPSASLGKASSRKPFGILSPNVLCSMSGKSPVESSLNVKTKKNAPSATIHQGEEEGPLDIWAVVKPGNTKEKIAFFASHQCSNRIGSMKIKSSWDIDGRATKRRKKSGDLKKAKVQVERMREVNSRCYQPEPFACGIEHCSVHYVSDSGDGVYAGRPLSVIQMVAFLEQRASALLASCSKNCTNSPAIVRFSGQSRGVPAVSESYSAPGACEEPTERGNLEVGEPQSEPVRVLDMVAKLESECLKRQGQREPGSLSRNNSFRRNVGRVLLANSTQADEGKTKKGVLEAPDTQVNPVGSVSVDCGPSRADRCSPKEDQAWDGASQDCPPLPAGVSFHIDSAELEPGSQTAVKNSNRYDVEMTDELVGLPFSSHTYSQASELPTDAVDCMSRELVSLTSRNPDQRKESLCISITVSKVDKDQPSILNSCEDPVPGMLFFLPPGQHLSDYSQLNESTTKESSEASQLEDAAGGDSASEEKSGSAEPFVLPASSVESTLPVLEASSWKKQVSHDFLETRFKIQQLLEPQQYMAFLPHHIMVKIFRLLPTKSLVALKCTCCYFKFIIEYYNIRPADSRWVRDPRYREDPCKQCKKKYVKGDVSLCRWHPKPYCQALPYGPGYWMCCHRSQKGFPGCKLGLHDNHWVPACHSFNRAIHKKAKGTEAEEEY</sequence>
<feature type="chain" id="PRO_0000119926" description="F-box only protein 34">
    <location>
        <begin position="1"/>
        <end position="711"/>
    </location>
</feature>
<feature type="domain" description="F-box" evidence="2">
    <location>
        <begin position="572"/>
        <end position="624"/>
    </location>
</feature>
<feature type="region of interest" description="Disordered" evidence="3">
    <location>
        <begin position="1"/>
        <end position="36"/>
    </location>
</feature>
<feature type="region of interest" description="Disordered" evidence="3">
    <location>
        <begin position="249"/>
        <end position="271"/>
    </location>
</feature>
<feature type="region of interest" description="Disordered" evidence="3">
    <location>
        <begin position="337"/>
        <end position="372"/>
    </location>
</feature>
<feature type="region of interest" description="Disordered" evidence="3">
    <location>
        <begin position="494"/>
        <end position="529"/>
    </location>
</feature>
<feature type="compositionally biased region" description="Basic and acidic residues" evidence="3">
    <location>
        <begin position="10"/>
        <end position="23"/>
    </location>
</feature>
<feature type="compositionally biased region" description="Basic and acidic residues" evidence="3">
    <location>
        <begin position="354"/>
        <end position="364"/>
    </location>
</feature>
<feature type="sequence variant" id="VAR_049047" description="In dbSNP:rs35070799.">
    <original>V</original>
    <variation>A</variation>
    <location>
        <position position="432"/>
    </location>
</feature>
<feature type="sequence variant" id="VAR_021489" description="In dbSNP:rs1045002." evidence="4 5 6">
    <original>I</original>
    <variation>N</variation>
    <location>
        <position position="470"/>
    </location>
</feature>
<feature type="sequence variant" id="VAR_021490" description="In dbSNP:rs3742569." evidence="4 5 6">
    <original>L</original>
    <variation>P</variation>
    <location>
        <position position="533"/>
    </location>
</feature>
<feature type="sequence variant" id="VAR_049048" description="In dbSNP:rs10138395.">
    <original>G</original>
    <variation>V</variation>
    <location>
        <position position="704"/>
    </location>
</feature>
<evidence type="ECO:0000250" key="1"/>
<evidence type="ECO:0000255" key="2">
    <source>
        <dbReference type="PROSITE-ProRule" id="PRU00080"/>
    </source>
</evidence>
<evidence type="ECO:0000256" key="3">
    <source>
        <dbReference type="SAM" id="MobiDB-lite"/>
    </source>
</evidence>
<evidence type="ECO:0000269" key="4">
    <source>
    </source>
</evidence>
<evidence type="ECO:0000269" key="5">
    <source>
    </source>
</evidence>
<evidence type="ECO:0000269" key="6">
    <source ref="4"/>
</evidence>
<evidence type="ECO:0000305" key="7"/>
<proteinExistence type="evidence at protein level"/>
<keyword id="KW-1267">Proteomics identification</keyword>
<keyword id="KW-1185">Reference proteome</keyword>
<keyword id="KW-0833">Ubl conjugation pathway</keyword>
<name>FBX34_HUMAN</name>